<sequence>MIVKAEIGNQDPIYIEANKYAHQADSSILISQGGTKVLVTVCVSEEPLCGIDFAPLSVDYRERSFAWGKIPGGFIKREGKPTDREVLISRVIDRPLRPLMPKGFLNEVVVTCLTLSADDKYDPDVLAITGASAALVSSSVPFEGPIAGMRVCRVNGEFIINPTYEQRKNSDMDIVMALSKDAIVMVEGGAKEVEESVLLDALFFGLEKGQTLIKAQEELVDSLKPEKKPIGHIGLSDDMANKLKEIASSKILEAFSIEDKKERSKALKDVYAQAMQKLGISKEQEFDFLVSFKDLESQLMREQILKYKKRIDGRKETDIRPITIEMHPLERPHGSAVFTRGQTQALATVTLAPKDEAQLVETIFEGETFKRFMLHYNFPPFSTGEARPWGPPRRREIGHGALAERALEPLLAKEEDFPYIIRVVSDILESNGSSSMATVCAGSLALFDAGVPMKKHVAGIAMGLIKDGDNFVILTDILGDEDHLGDMDFKVAGTRDGVTSVQMDIKIKGLSKDIMIKALNQAKEARMFILDKLYEAIPEPNKEVSKYAPKAQVMKIPEDKVGLVIGPAGKNIKYIKEQFGASVWIDGANAYINAPTIEAVNKAADFINSLIQEVEVGGVYEGKVIRVENYGLFVEVLPGKVGLLHASAMTEKPTINVGDTIKVKVMAIDEQNRLNLCSPDYQKPENQERPRKEQLNRKPHHRK</sequence>
<protein>
    <recommendedName>
        <fullName evidence="1">Polyribonucleotide nucleotidyltransferase</fullName>
        <ecNumber evidence="1">2.7.7.8</ecNumber>
    </recommendedName>
    <alternativeName>
        <fullName evidence="1">Polynucleotide phosphorylase</fullName>
        <shortName evidence="1">PNPase</shortName>
    </alternativeName>
</protein>
<organism>
    <name type="scientific">Hydrogenobaculum sp. (strain Y04AAS1)</name>
    <dbReference type="NCBI Taxonomy" id="380749"/>
    <lineage>
        <taxon>Bacteria</taxon>
        <taxon>Pseudomonadati</taxon>
        <taxon>Aquificota</taxon>
        <taxon>Aquificia</taxon>
        <taxon>Aquificales</taxon>
        <taxon>Aquificaceae</taxon>
        <taxon>Hydrogenobaculum</taxon>
    </lineage>
</organism>
<name>PNP_HYDS0</name>
<gene>
    <name evidence="1" type="primary">pnp</name>
    <name type="ordered locus">HY04AAS1_0143</name>
</gene>
<accession>B4U6R7</accession>
<evidence type="ECO:0000255" key="1">
    <source>
        <dbReference type="HAMAP-Rule" id="MF_01595"/>
    </source>
</evidence>
<evidence type="ECO:0000256" key="2">
    <source>
        <dbReference type="SAM" id="MobiDB-lite"/>
    </source>
</evidence>
<comment type="function">
    <text evidence="1">Involved in mRNA degradation. Catalyzes the phosphorolysis of single-stranded polyribonucleotides processively in the 3'- to 5'-direction.</text>
</comment>
<comment type="catalytic activity">
    <reaction evidence="1">
        <text>RNA(n+1) + phosphate = RNA(n) + a ribonucleoside 5'-diphosphate</text>
        <dbReference type="Rhea" id="RHEA:22096"/>
        <dbReference type="Rhea" id="RHEA-COMP:14527"/>
        <dbReference type="Rhea" id="RHEA-COMP:17342"/>
        <dbReference type="ChEBI" id="CHEBI:43474"/>
        <dbReference type="ChEBI" id="CHEBI:57930"/>
        <dbReference type="ChEBI" id="CHEBI:140395"/>
        <dbReference type="EC" id="2.7.7.8"/>
    </reaction>
</comment>
<comment type="cofactor">
    <cofactor evidence="1">
        <name>Mg(2+)</name>
        <dbReference type="ChEBI" id="CHEBI:18420"/>
    </cofactor>
</comment>
<comment type="subcellular location">
    <subcellularLocation>
        <location evidence="1">Cytoplasm</location>
    </subcellularLocation>
</comment>
<comment type="similarity">
    <text evidence="1">Belongs to the polyribonucleotide nucleotidyltransferase family.</text>
</comment>
<proteinExistence type="inferred from homology"/>
<keyword id="KW-0963">Cytoplasm</keyword>
<keyword id="KW-0460">Magnesium</keyword>
<keyword id="KW-0479">Metal-binding</keyword>
<keyword id="KW-0548">Nucleotidyltransferase</keyword>
<keyword id="KW-0694">RNA-binding</keyword>
<keyword id="KW-0808">Transferase</keyword>
<feature type="chain" id="PRO_1000147923" description="Polyribonucleotide nucleotidyltransferase">
    <location>
        <begin position="1"/>
        <end position="703"/>
    </location>
</feature>
<feature type="domain" description="KH" evidence="1">
    <location>
        <begin position="549"/>
        <end position="607"/>
    </location>
</feature>
<feature type="domain" description="S1 motif" evidence="1">
    <location>
        <begin position="617"/>
        <end position="679"/>
    </location>
</feature>
<feature type="region of interest" description="Disordered" evidence="2">
    <location>
        <begin position="677"/>
        <end position="703"/>
    </location>
</feature>
<feature type="compositionally biased region" description="Basic and acidic residues" evidence="2">
    <location>
        <begin position="682"/>
        <end position="696"/>
    </location>
</feature>
<feature type="binding site" evidence="1">
    <location>
        <position position="482"/>
    </location>
    <ligand>
        <name>Mg(2+)</name>
        <dbReference type="ChEBI" id="CHEBI:18420"/>
    </ligand>
</feature>
<feature type="binding site" evidence="1">
    <location>
        <position position="488"/>
    </location>
    <ligand>
        <name>Mg(2+)</name>
        <dbReference type="ChEBI" id="CHEBI:18420"/>
    </ligand>
</feature>
<dbReference type="EC" id="2.7.7.8" evidence="1"/>
<dbReference type="EMBL" id="CP001130">
    <property type="protein sequence ID" value="ACG56835.1"/>
    <property type="molecule type" value="Genomic_DNA"/>
</dbReference>
<dbReference type="RefSeq" id="WP_012513192.1">
    <property type="nucleotide sequence ID" value="NC_011126.1"/>
</dbReference>
<dbReference type="SMR" id="B4U6R7"/>
<dbReference type="STRING" id="380749.HY04AAS1_0143"/>
<dbReference type="KEGG" id="hya:HY04AAS1_0143"/>
<dbReference type="eggNOG" id="COG1185">
    <property type="taxonomic scope" value="Bacteria"/>
</dbReference>
<dbReference type="HOGENOM" id="CLU_004217_2_2_0"/>
<dbReference type="OrthoDB" id="9804305at2"/>
<dbReference type="GO" id="GO:0005829">
    <property type="term" value="C:cytosol"/>
    <property type="evidence" value="ECO:0007669"/>
    <property type="project" value="TreeGrafter"/>
</dbReference>
<dbReference type="GO" id="GO:0000175">
    <property type="term" value="F:3'-5'-RNA exonuclease activity"/>
    <property type="evidence" value="ECO:0007669"/>
    <property type="project" value="TreeGrafter"/>
</dbReference>
<dbReference type="GO" id="GO:0000287">
    <property type="term" value="F:magnesium ion binding"/>
    <property type="evidence" value="ECO:0007669"/>
    <property type="project" value="UniProtKB-UniRule"/>
</dbReference>
<dbReference type="GO" id="GO:0004654">
    <property type="term" value="F:polyribonucleotide nucleotidyltransferase activity"/>
    <property type="evidence" value="ECO:0007669"/>
    <property type="project" value="UniProtKB-UniRule"/>
</dbReference>
<dbReference type="GO" id="GO:0003723">
    <property type="term" value="F:RNA binding"/>
    <property type="evidence" value="ECO:0007669"/>
    <property type="project" value="UniProtKB-UniRule"/>
</dbReference>
<dbReference type="GO" id="GO:0006402">
    <property type="term" value="P:mRNA catabolic process"/>
    <property type="evidence" value="ECO:0007669"/>
    <property type="project" value="UniProtKB-UniRule"/>
</dbReference>
<dbReference type="GO" id="GO:0006396">
    <property type="term" value="P:RNA processing"/>
    <property type="evidence" value="ECO:0007669"/>
    <property type="project" value="InterPro"/>
</dbReference>
<dbReference type="CDD" id="cd02393">
    <property type="entry name" value="KH-I_PNPase"/>
    <property type="match status" value="1"/>
</dbReference>
<dbReference type="CDD" id="cd11363">
    <property type="entry name" value="RNase_PH_PNPase_1"/>
    <property type="match status" value="1"/>
</dbReference>
<dbReference type="CDD" id="cd11364">
    <property type="entry name" value="RNase_PH_PNPase_2"/>
    <property type="match status" value="1"/>
</dbReference>
<dbReference type="FunFam" id="3.30.1370.10:FF:000001">
    <property type="entry name" value="Polyribonucleotide nucleotidyltransferase"/>
    <property type="match status" value="1"/>
</dbReference>
<dbReference type="FunFam" id="3.30.230.70:FF:000001">
    <property type="entry name" value="Polyribonucleotide nucleotidyltransferase"/>
    <property type="match status" value="1"/>
</dbReference>
<dbReference type="FunFam" id="3.30.230.70:FF:000002">
    <property type="entry name" value="Polyribonucleotide nucleotidyltransferase"/>
    <property type="match status" value="1"/>
</dbReference>
<dbReference type="Gene3D" id="3.30.230.70">
    <property type="entry name" value="GHMP Kinase, N-terminal domain"/>
    <property type="match status" value="2"/>
</dbReference>
<dbReference type="Gene3D" id="3.30.1370.10">
    <property type="entry name" value="K Homology domain, type 1"/>
    <property type="match status" value="1"/>
</dbReference>
<dbReference type="Gene3D" id="2.40.50.140">
    <property type="entry name" value="Nucleic acid-binding proteins"/>
    <property type="match status" value="1"/>
</dbReference>
<dbReference type="HAMAP" id="MF_01595">
    <property type="entry name" value="PNPase"/>
    <property type="match status" value="1"/>
</dbReference>
<dbReference type="InterPro" id="IPR001247">
    <property type="entry name" value="ExoRNase_PH_dom1"/>
</dbReference>
<dbReference type="InterPro" id="IPR015847">
    <property type="entry name" value="ExoRNase_PH_dom2"/>
</dbReference>
<dbReference type="InterPro" id="IPR036345">
    <property type="entry name" value="ExoRNase_PH_dom2_sf"/>
</dbReference>
<dbReference type="InterPro" id="IPR004087">
    <property type="entry name" value="KH_dom"/>
</dbReference>
<dbReference type="InterPro" id="IPR004088">
    <property type="entry name" value="KH_dom_type_1"/>
</dbReference>
<dbReference type="InterPro" id="IPR036612">
    <property type="entry name" value="KH_dom_type_1_sf"/>
</dbReference>
<dbReference type="InterPro" id="IPR012340">
    <property type="entry name" value="NA-bd_OB-fold"/>
</dbReference>
<dbReference type="InterPro" id="IPR012162">
    <property type="entry name" value="PNPase"/>
</dbReference>
<dbReference type="InterPro" id="IPR027408">
    <property type="entry name" value="PNPase/RNase_PH_dom_sf"/>
</dbReference>
<dbReference type="InterPro" id="IPR015848">
    <property type="entry name" value="PNPase_PH_RNA-bd_bac/org-type"/>
</dbReference>
<dbReference type="InterPro" id="IPR036456">
    <property type="entry name" value="PNPase_PH_RNA-bd_sf"/>
</dbReference>
<dbReference type="InterPro" id="IPR020568">
    <property type="entry name" value="Ribosomal_Su5_D2-typ_SF"/>
</dbReference>
<dbReference type="InterPro" id="IPR003029">
    <property type="entry name" value="S1_domain"/>
</dbReference>
<dbReference type="NCBIfam" id="TIGR03591">
    <property type="entry name" value="polynuc_phos"/>
    <property type="match status" value="1"/>
</dbReference>
<dbReference type="NCBIfam" id="NF008805">
    <property type="entry name" value="PRK11824.1"/>
    <property type="match status" value="1"/>
</dbReference>
<dbReference type="PANTHER" id="PTHR11252">
    <property type="entry name" value="POLYRIBONUCLEOTIDE NUCLEOTIDYLTRANSFERASE"/>
    <property type="match status" value="1"/>
</dbReference>
<dbReference type="PANTHER" id="PTHR11252:SF0">
    <property type="entry name" value="POLYRIBONUCLEOTIDE NUCLEOTIDYLTRANSFERASE 1, MITOCHONDRIAL"/>
    <property type="match status" value="1"/>
</dbReference>
<dbReference type="Pfam" id="PF00013">
    <property type="entry name" value="KH_1"/>
    <property type="match status" value="1"/>
</dbReference>
<dbReference type="Pfam" id="PF03726">
    <property type="entry name" value="PNPase"/>
    <property type="match status" value="1"/>
</dbReference>
<dbReference type="Pfam" id="PF01138">
    <property type="entry name" value="RNase_PH"/>
    <property type="match status" value="2"/>
</dbReference>
<dbReference type="Pfam" id="PF03725">
    <property type="entry name" value="RNase_PH_C"/>
    <property type="match status" value="2"/>
</dbReference>
<dbReference type="Pfam" id="PF00575">
    <property type="entry name" value="S1"/>
    <property type="match status" value="1"/>
</dbReference>
<dbReference type="PIRSF" id="PIRSF005499">
    <property type="entry name" value="PNPase"/>
    <property type="match status" value="1"/>
</dbReference>
<dbReference type="SMART" id="SM00322">
    <property type="entry name" value="KH"/>
    <property type="match status" value="1"/>
</dbReference>
<dbReference type="SMART" id="SM00316">
    <property type="entry name" value="S1"/>
    <property type="match status" value="1"/>
</dbReference>
<dbReference type="SUPFAM" id="SSF54791">
    <property type="entry name" value="Eukaryotic type KH-domain (KH-domain type I)"/>
    <property type="match status" value="1"/>
</dbReference>
<dbReference type="SUPFAM" id="SSF50249">
    <property type="entry name" value="Nucleic acid-binding proteins"/>
    <property type="match status" value="1"/>
</dbReference>
<dbReference type="SUPFAM" id="SSF46915">
    <property type="entry name" value="Polynucleotide phosphorylase/guanosine pentaphosphate synthase (PNPase/GPSI), domain 3"/>
    <property type="match status" value="1"/>
</dbReference>
<dbReference type="SUPFAM" id="SSF55666">
    <property type="entry name" value="Ribonuclease PH domain 2-like"/>
    <property type="match status" value="2"/>
</dbReference>
<dbReference type="SUPFAM" id="SSF54211">
    <property type="entry name" value="Ribosomal protein S5 domain 2-like"/>
    <property type="match status" value="2"/>
</dbReference>
<dbReference type="PROSITE" id="PS50084">
    <property type="entry name" value="KH_TYPE_1"/>
    <property type="match status" value="1"/>
</dbReference>
<dbReference type="PROSITE" id="PS50126">
    <property type="entry name" value="S1"/>
    <property type="match status" value="1"/>
</dbReference>
<reference key="1">
    <citation type="journal article" date="2009" name="J. Bacteriol.">
        <title>Complete and draft genome sequences of six members of the Aquificales.</title>
        <authorList>
            <person name="Reysenbach A.-L."/>
            <person name="Hamamura N."/>
            <person name="Podar M."/>
            <person name="Griffiths E."/>
            <person name="Ferreira S."/>
            <person name="Hochstein R."/>
            <person name="Heidelberg J."/>
            <person name="Johnson J."/>
            <person name="Mead D."/>
            <person name="Pohorille A."/>
            <person name="Sarmiento M."/>
            <person name="Schweighofer K."/>
            <person name="Seshadri R."/>
            <person name="Voytek M.A."/>
        </authorList>
    </citation>
    <scope>NUCLEOTIDE SEQUENCE [LARGE SCALE GENOMIC DNA]</scope>
    <source>
        <strain>Y04AAS1</strain>
    </source>
</reference>